<gene>
    <name evidence="2" type="primary">acdAII</name>
    <name evidence="4" type="ordered locus">PF0532</name>
</gene>
<reference key="1">
    <citation type="journal article" date="1999" name="Genetics">
        <title>Divergence of the hyperthermophilic archaea Pyrococcus furiosus and P. horikoshii inferred from complete genomic sequences.</title>
        <authorList>
            <person name="Maeder D.L."/>
            <person name="Weiss R.B."/>
            <person name="Dunn D.M."/>
            <person name="Cherry J.L."/>
            <person name="Gonzalez J.M."/>
            <person name="DiRuggiero J."/>
            <person name="Robb F.T."/>
        </authorList>
    </citation>
    <scope>NUCLEOTIDE SEQUENCE [LARGE SCALE GENOMIC DNA]</scope>
    <source>
        <strain>ATCC 43587 / DSM 3638 / JCM 8422 / Vc1</strain>
    </source>
</reference>
<reference key="2">
    <citation type="journal article" date="1996" name="J. Bacteriol.">
        <title>Purification and characterization of two reversible and ADP-dependent acetyl coenzyme A synthetases from the hyperthermophilic archaeon Pyrococcus furiosus.</title>
        <authorList>
            <person name="Mai X."/>
            <person name="Adams M.W."/>
        </authorList>
    </citation>
    <scope>PROTEIN SEQUENCE OF 1-39</scope>
    <scope>FUNCTION</scope>
    <scope>CATALYTIC ACTIVITY</scope>
    <scope>BIOPHYSICOCHEMICAL PROPERTIES</scope>
    <scope>SUBUNIT</scope>
    <source>
        <strain>ATCC 43587 / DSM 3638 / JCM 8422 / Vc1</strain>
    </source>
</reference>
<reference key="3">
    <citation type="journal article" date="1999" name="J. Bacteriol.">
        <title>Acetyl coenzyme A synthetase (ADP forming) from the hyperthermophilic Archaeon pyrococcus furiosus: identification, cloning, separate expression of the encoding genes, acdAI and acdBI, in Escherichia coli, and in vitro reconstitution of the active heterotetrameric enzyme from its recombinant subunits.</title>
        <authorList>
            <person name="Musfeldt M."/>
            <person name="Selig M."/>
            <person name="Schonheit P."/>
        </authorList>
    </citation>
    <scope>GENE NAME</scope>
</reference>
<proteinExistence type="evidence at protein level"/>
<organism>
    <name type="scientific">Pyrococcus furiosus (strain ATCC 43587 / DSM 3638 / JCM 8422 / Vc1)</name>
    <dbReference type="NCBI Taxonomy" id="186497"/>
    <lineage>
        <taxon>Archaea</taxon>
        <taxon>Methanobacteriati</taxon>
        <taxon>Methanobacteriota</taxon>
        <taxon>Thermococci</taxon>
        <taxon>Thermococcales</taxon>
        <taxon>Thermococcaceae</taxon>
        <taxon>Pyrococcus</taxon>
    </lineage>
</organism>
<dbReference type="EC" id="6.2.1.13" evidence="1"/>
<dbReference type="EMBL" id="AE009950">
    <property type="protein sequence ID" value="AAL80656.1"/>
    <property type="molecule type" value="Genomic_DNA"/>
</dbReference>
<dbReference type="RefSeq" id="WP_011011649.1">
    <property type="nucleotide sequence ID" value="NZ_CP023154.1"/>
</dbReference>
<dbReference type="SMR" id="Q8U3D6"/>
<dbReference type="STRING" id="186497.PF0532"/>
<dbReference type="PaxDb" id="186497-PF0532"/>
<dbReference type="GeneID" id="41712334"/>
<dbReference type="KEGG" id="pfu:PF0532"/>
<dbReference type="PATRIC" id="fig|186497.12.peg.556"/>
<dbReference type="eggNOG" id="arCOG01340">
    <property type="taxonomic scope" value="Archaea"/>
</dbReference>
<dbReference type="HOGENOM" id="CLU_007415_2_3_2"/>
<dbReference type="OrthoDB" id="18103at2157"/>
<dbReference type="PhylomeDB" id="Q8U3D6"/>
<dbReference type="SABIO-RK" id="Q8U3D6"/>
<dbReference type="Proteomes" id="UP000001013">
    <property type="component" value="Chromosome"/>
</dbReference>
<dbReference type="GO" id="GO:0043758">
    <property type="term" value="F:acetate-CoA ligase (ADP-forming) activity"/>
    <property type="evidence" value="ECO:0007669"/>
    <property type="project" value="UniProtKB-EC"/>
</dbReference>
<dbReference type="GO" id="GO:0005524">
    <property type="term" value="F:ATP binding"/>
    <property type="evidence" value="ECO:0007669"/>
    <property type="project" value="UniProtKB-KW"/>
</dbReference>
<dbReference type="Gene3D" id="3.40.50.720">
    <property type="entry name" value="NAD(P)-binding Rossmann-like Domain"/>
    <property type="match status" value="1"/>
</dbReference>
<dbReference type="Gene3D" id="3.40.50.261">
    <property type="entry name" value="Succinyl-CoA synthetase domains"/>
    <property type="match status" value="2"/>
</dbReference>
<dbReference type="InterPro" id="IPR014089">
    <property type="entry name" value="AcCoA-synth-alpha"/>
</dbReference>
<dbReference type="InterPro" id="IPR051538">
    <property type="entry name" value="Acyl-CoA_Synth/Transferase"/>
</dbReference>
<dbReference type="InterPro" id="IPR003781">
    <property type="entry name" value="CoA-bd"/>
</dbReference>
<dbReference type="InterPro" id="IPR043938">
    <property type="entry name" value="Ligase_CoA_dom"/>
</dbReference>
<dbReference type="InterPro" id="IPR036291">
    <property type="entry name" value="NAD(P)-bd_dom_sf"/>
</dbReference>
<dbReference type="InterPro" id="IPR032875">
    <property type="entry name" value="Succ_CoA_lig_flav_dom"/>
</dbReference>
<dbReference type="InterPro" id="IPR016102">
    <property type="entry name" value="Succinyl-CoA_synth-like"/>
</dbReference>
<dbReference type="NCBIfam" id="TIGR02717">
    <property type="entry name" value="AcCoA-syn-alpha"/>
    <property type="match status" value="1"/>
</dbReference>
<dbReference type="PANTHER" id="PTHR43334">
    <property type="entry name" value="ACETATE--COA LIGASE [ADP-FORMING]"/>
    <property type="match status" value="1"/>
</dbReference>
<dbReference type="PANTHER" id="PTHR43334:SF2">
    <property type="entry name" value="ACETATE--COA LIGASE [ADP-FORMING]"/>
    <property type="match status" value="1"/>
</dbReference>
<dbReference type="Pfam" id="PF13380">
    <property type="entry name" value="CoA_binding_2"/>
    <property type="match status" value="1"/>
</dbReference>
<dbReference type="Pfam" id="PF19045">
    <property type="entry name" value="Ligase_CoA_2"/>
    <property type="match status" value="1"/>
</dbReference>
<dbReference type="Pfam" id="PF13607">
    <property type="entry name" value="Succ_CoA_lig"/>
    <property type="match status" value="1"/>
</dbReference>
<dbReference type="SMART" id="SM00881">
    <property type="entry name" value="CoA_binding"/>
    <property type="match status" value="1"/>
</dbReference>
<dbReference type="SUPFAM" id="SSF51735">
    <property type="entry name" value="NAD(P)-binding Rossmann-fold domains"/>
    <property type="match status" value="1"/>
</dbReference>
<dbReference type="SUPFAM" id="SSF52210">
    <property type="entry name" value="Succinyl-CoA synthetase domains"/>
    <property type="match status" value="2"/>
</dbReference>
<sequence length="457" mass="49263">MLDYFFNPRGIAVIGASNDPKKLGYEVFKNLKEYQGGKVYPVNVREEEVQGVKAYKSVKEIPGEVDLAIIVVPKKFVKQTLIECGEKGVKGVVIITAGFGETGEEGKREEKELVEIAHKYGMRIIGPNCVGIMNTHANLNATFITVAKKGNVAFISQSGALGAGIVYKTIKEDIGFSKFISVGNMADLDFADLMEYLADTQEDKAIALYIEGIKDGRRFIEVAKKVTKKKPVIALKAGKSESGSRAAASHTGSLAGSWKIYEAAFKQSGVLVANTIDEMLSMARAFTQPLPKGNRVAIMTNAGGPGVLTADEIDKRGLKLANLEEKTIEELRSFLPPMAAVKNPVDMIASARGEDYYRTAKLLLQDPNVDILIAICVVPTFAGMTPTEHAEGIIRAVKEVNNGKPVLALFMAGYVSEKAKELLEKNGIPTYERPEDVAAAAYALVQQAKNVGGGVNG</sequence>
<feature type="chain" id="PRO_0000430522" description="Acetate--CoA ligase [ADP-forming] II subunit alpha">
    <location>
        <begin position="1"/>
        <end position="457"/>
    </location>
</feature>
<accession>Q8U3D6</accession>
<name>ACDA2_PYRFU</name>
<protein>
    <recommendedName>
        <fullName evidence="3">Acetate--CoA ligase [ADP-forming] II subunit alpha</fullName>
        <ecNumber evidence="1">6.2.1.13</ecNumber>
    </recommendedName>
    <alternativeName>
        <fullName evidence="3">ADP-forming acetyl coenzyme A synthetase II subunit alpha</fullName>
        <shortName evidence="3">ACS II subunit alpha</shortName>
    </alternativeName>
</protein>
<comment type="function">
    <text evidence="1">Catalyzes the reversible formation of acetate and ATP from acetyl-CoA by using ADP and phosphate. Can use other substrates such as phenylacetyl-CoA, indoleacetyl-CoA and isobutyryl-CoA, but not succinyl-CoA. Seems to be involved primarily in the degradation of aryl-CoA esters to the corresponding acids. Participates in the conversion of acetyl-CoA to acetate and in the degradation of branched-chain amino acids via branched-chain-acyl-CoA esters.</text>
</comment>
<comment type="catalytic activity">
    <reaction evidence="1">
        <text>acetate + ATP + CoA = acetyl-CoA + ADP + phosphate</text>
        <dbReference type="Rhea" id="RHEA:15081"/>
        <dbReference type="ChEBI" id="CHEBI:30089"/>
        <dbReference type="ChEBI" id="CHEBI:30616"/>
        <dbReference type="ChEBI" id="CHEBI:43474"/>
        <dbReference type="ChEBI" id="CHEBI:57287"/>
        <dbReference type="ChEBI" id="CHEBI:57288"/>
        <dbReference type="ChEBI" id="CHEBI:456216"/>
        <dbReference type="EC" id="6.2.1.13"/>
    </reaction>
</comment>
<comment type="biophysicochemical properties">
    <kinetics>
        <KM evidence="1">61 uM for ADP (at 80 degrees Celsius)</KM>
        <KM evidence="1">236 uM for GDP (at 80 degrees Celsius)</KM>
        <KM evidence="1">580 uM for phosphate (at 80 degrees Celsius)</KM>
        <KM evidence="1">26 uM for acetyl-CoA (at 80 degrees Celsius)</KM>
        <KM evidence="1">12 uM for isobutyryl-CoA (at 80 degrees Celsius)</KM>
        <KM evidence="1">4 uM for phenylacetyl-CoA (at 80 degrees Celsius)</KM>
        <KM evidence="1">326 uM for ATP (at 80 degrees Celsius)</KM>
        <KM evidence="1">770 uM for GTP (at 80 degrees Celsius)</KM>
        <KM evidence="1">74 uM for CoA (at 80 degrees Celsius)</KM>
        <KM evidence="1">10700 uM for acetate (at 80 degrees Celsius)</KM>
        <KM evidence="1">5800 uM for isobutyrate (at 80 degrees Celsius)</KM>
        <KM evidence="1">2000 uM for indoleacetate (at 80 degrees Celsius)</KM>
        <KM evidence="1">768 uM for phenylacetate (at 80 degrees Celsius)</KM>
        <text evidence="1">kcat is 115 sec(-1) for ADP. kcat is 21 sec(-1) for GDP. kcat is 117 sec(-1) for phosphate. kcat is 42 sec(-1) for acetyl-CoA. kcat is 8 sec(-1) for isobutyryl-CoA. kcat is 138 sec(-1) for phenylacetyl-CoA. kcat is 68 sec(-1) for ATP. kcat is 27 sec(-1) for GTP. kcat is 70 sec(-1) for CoA. kcat is 67 sec(-1) for acetate. kcat is 22 sec(-1) for isobutyrate. kcat is 66 sec(-1) for indoleacetate. kcat is 89 sec(-1) for phenylacetate.</text>
    </kinetics>
    <phDependence>
        <text evidence="1">Optimum pH is 9.0 (at 80 degrees Celsius).</text>
    </phDependence>
    <temperatureDependence>
        <text evidence="1">Optimum temperature is above 90 degrees Celsius (at pH 8.0).</text>
    </temperatureDependence>
</comment>
<comment type="subunit">
    <text evidence="1">Heterotetramer of two alpha and two beta subunits.</text>
</comment>
<comment type="similarity">
    <text evidence="3">Belongs to the acetate CoA ligase alpha subunit family.</text>
</comment>
<evidence type="ECO:0000269" key="1">
    <source>
    </source>
</evidence>
<evidence type="ECO:0000303" key="2">
    <source>
    </source>
</evidence>
<evidence type="ECO:0000305" key="3"/>
<evidence type="ECO:0000312" key="4">
    <source>
        <dbReference type="EMBL" id="AAL80656.1"/>
    </source>
</evidence>
<keyword id="KW-0067">ATP-binding</keyword>
<keyword id="KW-0903">Direct protein sequencing</keyword>
<keyword id="KW-0436">Ligase</keyword>
<keyword id="KW-0547">Nucleotide-binding</keyword>
<keyword id="KW-1185">Reference proteome</keyword>